<protein>
    <recommendedName>
        <fullName>Pentatricopeptide repeat-containing protein At5g15300</fullName>
    </recommendedName>
</protein>
<feature type="chain" id="PRO_0000363522" description="Pentatricopeptide repeat-containing protein At5g15300">
    <location>
        <begin position="1"/>
        <end position="548"/>
    </location>
</feature>
<feature type="repeat" description="PPR 1">
    <location>
        <begin position="76"/>
        <end position="110"/>
    </location>
</feature>
<feature type="repeat" description="PPR 2">
    <location>
        <begin position="111"/>
        <end position="145"/>
    </location>
</feature>
<feature type="repeat" description="PPR 3">
    <location>
        <begin position="146"/>
        <end position="176"/>
    </location>
</feature>
<feature type="repeat" description="PPR 4">
    <location>
        <begin position="177"/>
        <end position="211"/>
    </location>
</feature>
<feature type="repeat" description="PPR 5">
    <location>
        <begin position="212"/>
        <end position="238"/>
    </location>
</feature>
<feature type="repeat" description="PPR 6">
    <location>
        <begin position="239"/>
        <end position="273"/>
    </location>
</feature>
<feature type="repeat" description="PPR 7">
    <location>
        <begin position="274"/>
        <end position="308"/>
    </location>
</feature>
<feature type="repeat" description="PPR 8">
    <location>
        <begin position="314"/>
        <end position="348"/>
    </location>
</feature>
<feature type="repeat" description="PPR 9">
    <location>
        <begin position="349"/>
        <end position="378"/>
    </location>
</feature>
<feature type="repeat" description="PPR 10">
    <location>
        <begin position="379"/>
        <end position="409"/>
    </location>
</feature>
<feature type="repeat" description="PPR 11">
    <location>
        <begin position="415"/>
        <end position="445"/>
    </location>
</feature>
<feature type="region of interest" description="Type E motif">
    <location>
        <begin position="450"/>
        <end position="525"/>
    </location>
</feature>
<accession>Q9LXF2</accession>
<proteinExistence type="evidence at transcript level"/>
<organism>
    <name type="scientific">Arabidopsis thaliana</name>
    <name type="common">Mouse-ear cress</name>
    <dbReference type="NCBI Taxonomy" id="3702"/>
    <lineage>
        <taxon>Eukaryota</taxon>
        <taxon>Viridiplantae</taxon>
        <taxon>Streptophyta</taxon>
        <taxon>Embryophyta</taxon>
        <taxon>Tracheophyta</taxon>
        <taxon>Spermatophyta</taxon>
        <taxon>Magnoliopsida</taxon>
        <taxon>eudicotyledons</taxon>
        <taxon>Gunneridae</taxon>
        <taxon>Pentapetalae</taxon>
        <taxon>rosids</taxon>
        <taxon>malvids</taxon>
        <taxon>Brassicales</taxon>
        <taxon>Brassicaceae</taxon>
        <taxon>Camelineae</taxon>
        <taxon>Arabidopsis</taxon>
    </lineage>
</organism>
<reference key="1">
    <citation type="journal article" date="2000" name="Nature">
        <title>Sequence and analysis of chromosome 5 of the plant Arabidopsis thaliana.</title>
        <authorList>
            <person name="Tabata S."/>
            <person name="Kaneko T."/>
            <person name="Nakamura Y."/>
            <person name="Kotani H."/>
            <person name="Kato T."/>
            <person name="Asamizu E."/>
            <person name="Miyajima N."/>
            <person name="Sasamoto S."/>
            <person name="Kimura T."/>
            <person name="Hosouchi T."/>
            <person name="Kawashima K."/>
            <person name="Kohara M."/>
            <person name="Matsumoto M."/>
            <person name="Matsuno A."/>
            <person name="Muraki A."/>
            <person name="Nakayama S."/>
            <person name="Nakazaki N."/>
            <person name="Naruo K."/>
            <person name="Okumura S."/>
            <person name="Shinpo S."/>
            <person name="Takeuchi C."/>
            <person name="Wada T."/>
            <person name="Watanabe A."/>
            <person name="Yamada M."/>
            <person name="Yasuda M."/>
            <person name="Sato S."/>
            <person name="de la Bastide M."/>
            <person name="Huang E."/>
            <person name="Spiegel L."/>
            <person name="Gnoj L."/>
            <person name="O'Shaughnessy A."/>
            <person name="Preston R."/>
            <person name="Habermann K."/>
            <person name="Murray J."/>
            <person name="Johnson D."/>
            <person name="Rohlfing T."/>
            <person name="Nelson J."/>
            <person name="Stoneking T."/>
            <person name="Pepin K."/>
            <person name="Spieth J."/>
            <person name="Sekhon M."/>
            <person name="Armstrong J."/>
            <person name="Becker M."/>
            <person name="Belter E."/>
            <person name="Cordum H."/>
            <person name="Cordes M."/>
            <person name="Courtney L."/>
            <person name="Courtney W."/>
            <person name="Dante M."/>
            <person name="Du H."/>
            <person name="Edwards J."/>
            <person name="Fryman J."/>
            <person name="Haakensen B."/>
            <person name="Lamar E."/>
            <person name="Latreille P."/>
            <person name="Leonard S."/>
            <person name="Meyer R."/>
            <person name="Mulvaney E."/>
            <person name="Ozersky P."/>
            <person name="Riley A."/>
            <person name="Strowmatt C."/>
            <person name="Wagner-McPherson C."/>
            <person name="Wollam A."/>
            <person name="Yoakum M."/>
            <person name="Bell M."/>
            <person name="Dedhia N."/>
            <person name="Parnell L."/>
            <person name="Shah R."/>
            <person name="Rodriguez M."/>
            <person name="Hoon See L."/>
            <person name="Vil D."/>
            <person name="Baker J."/>
            <person name="Kirchoff K."/>
            <person name="Toth K."/>
            <person name="King L."/>
            <person name="Bahret A."/>
            <person name="Miller B."/>
            <person name="Marra M.A."/>
            <person name="Martienssen R."/>
            <person name="McCombie W.R."/>
            <person name="Wilson R.K."/>
            <person name="Murphy G."/>
            <person name="Bancroft I."/>
            <person name="Volckaert G."/>
            <person name="Wambutt R."/>
            <person name="Duesterhoeft A."/>
            <person name="Stiekema W."/>
            <person name="Pohl T."/>
            <person name="Entian K.-D."/>
            <person name="Terryn N."/>
            <person name="Hartley N."/>
            <person name="Bent E."/>
            <person name="Johnson S."/>
            <person name="Langham S.-A."/>
            <person name="McCullagh B."/>
            <person name="Robben J."/>
            <person name="Grymonprez B."/>
            <person name="Zimmermann W."/>
            <person name="Ramsperger U."/>
            <person name="Wedler H."/>
            <person name="Balke K."/>
            <person name="Wedler E."/>
            <person name="Peters S."/>
            <person name="van Staveren M."/>
            <person name="Dirkse W."/>
            <person name="Mooijman P."/>
            <person name="Klein Lankhorst R."/>
            <person name="Weitzenegger T."/>
            <person name="Bothe G."/>
            <person name="Rose M."/>
            <person name="Hauf J."/>
            <person name="Berneiser S."/>
            <person name="Hempel S."/>
            <person name="Feldpausch M."/>
            <person name="Lamberth S."/>
            <person name="Villarroel R."/>
            <person name="Gielen J."/>
            <person name="Ardiles W."/>
            <person name="Bents O."/>
            <person name="Lemcke K."/>
            <person name="Kolesov G."/>
            <person name="Mayer K.F.X."/>
            <person name="Rudd S."/>
            <person name="Schoof H."/>
            <person name="Schueller C."/>
            <person name="Zaccaria P."/>
            <person name="Mewes H.-W."/>
            <person name="Bevan M."/>
            <person name="Fransz P.F."/>
        </authorList>
    </citation>
    <scope>NUCLEOTIDE SEQUENCE [LARGE SCALE GENOMIC DNA]</scope>
    <source>
        <strain>cv. Columbia</strain>
    </source>
</reference>
<reference key="2">
    <citation type="journal article" date="2017" name="Plant J.">
        <title>Araport11: a complete reannotation of the Arabidopsis thaliana reference genome.</title>
        <authorList>
            <person name="Cheng C.Y."/>
            <person name="Krishnakumar V."/>
            <person name="Chan A.P."/>
            <person name="Thibaud-Nissen F."/>
            <person name="Schobel S."/>
            <person name="Town C.D."/>
        </authorList>
    </citation>
    <scope>GENOME REANNOTATION</scope>
    <source>
        <strain>cv. Columbia</strain>
    </source>
</reference>
<reference key="3">
    <citation type="journal article" date="2004" name="Genome Res.">
        <title>Whole genome sequence comparisons and 'full-length' cDNA sequences: a combined approach to evaluate and improve Arabidopsis genome annotation.</title>
        <authorList>
            <person name="Castelli V."/>
            <person name="Aury J.-M."/>
            <person name="Jaillon O."/>
            <person name="Wincker P."/>
            <person name="Clepet C."/>
            <person name="Menard M."/>
            <person name="Cruaud C."/>
            <person name="Quetier F."/>
            <person name="Scarpelli C."/>
            <person name="Schaechter V."/>
            <person name="Temple G."/>
            <person name="Caboche M."/>
            <person name="Weissenbach J."/>
            <person name="Salanoubat M."/>
        </authorList>
    </citation>
    <scope>NUCLEOTIDE SEQUENCE [LARGE SCALE MRNA]</scope>
    <source>
        <strain>cv. Columbia</strain>
    </source>
</reference>
<reference key="4">
    <citation type="journal article" date="2004" name="Plant Cell">
        <title>Genome-wide analysis of Arabidopsis pentatricopeptide repeat proteins reveals their essential role in organelle biogenesis.</title>
        <authorList>
            <person name="Lurin C."/>
            <person name="Andres C."/>
            <person name="Aubourg S."/>
            <person name="Bellaoui M."/>
            <person name="Bitton F."/>
            <person name="Bruyere C."/>
            <person name="Caboche M."/>
            <person name="Debast C."/>
            <person name="Gualberto J."/>
            <person name="Hoffmann B."/>
            <person name="Lecharny A."/>
            <person name="Le Ret M."/>
            <person name="Martin-Magniette M.-L."/>
            <person name="Mireau H."/>
            <person name="Peeters N."/>
            <person name="Renou J.-P."/>
            <person name="Szurek B."/>
            <person name="Taconnat L."/>
            <person name="Small I."/>
        </authorList>
    </citation>
    <scope>GENE FAMILY</scope>
</reference>
<dbReference type="EMBL" id="AL353993">
    <property type="protein sequence ID" value="CAB89340.1"/>
    <property type="status" value="ALT_INIT"/>
    <property type="molecule type" value="Genomic_DNA"/>
</dbReference>
<dbReference type="EMBL" id="CP002688">
    <property type="protein sequence ID" value="AED92145.1"/>
    <property type="molecule type" value="Genomic_DNA"/>
</dbReference>
<dbReference type="EMBL" id="BX832059">
    <property type="status" value="NOT_ANNOTATED_CDS"/>
    <property type="molecule type" value="mRNA"/>
</dbReference>
<dbReference type="PIR" id="T49965">
    <property type="entry name" value="T49965"/>
</dbReference>
<dbReference type="RefSeq" id="NP_197034.2">
    <property type="nucleotide sequence ID" value="NM_121534.3"/>
</dbReference>
<dbReference type="SMR" id="Q9LXF2"/>
<dbReference type="FunCoup" id="Q9LXF2">
    <property type="interactions" value="607"/>
</dbReference>
<dbReference type="STRING" id="3702.Q9LXF2"/>
<dbReference type="PaxDb" id="3702-AT5G15300.1"/>
<dbReference type="ProteomicsDB" id="249009"/>
<dbReference type="EnsemblPlants" id="AT5G15300.1">
    <property type="protein sequence ID" value="AT5G15300.1"/>
    <property type="gene ID" value="AT5G15300"/>
</dbReference>
<dbReference type="GeneID" id="831382"/>
<dbReference type="Gramene" id="AT5G15300.1">
    <property type="protein sequence ID" value="AT5G15300.1"/>
    <property type="gene ID" value="AT5G15300"/>
</dbReference>
<dbReference type="KEGG" id="ath:AT5G15300"/>
<dbReference type="Araport" id="AT5G15300"/>
<dbReference type="TAIR" id="AT5G15300"/>
<dbReference type="eggNOG" id="KOG4197">
    <property type="taxonomic scope" value="Eukaryota"/>
</dbReference>
<dbReference type="HOGENOM" id="CLU_002706_37_2_1"/>
<dbReference type="InParanoid" id="Q9LXF2"/>
<dbReference type="OMA" id="EPDIFMW"/>
<dbReference type="PhylomeDB" id="Q9LXF2"/>
<dbReference type="PRO" id="PR:Q9LXF2"/>
<dbReference type="Proteomes" id="UP000006548">
    <property type="component" value="Chromosome 5"/>
</dbReference>
<dbReference type="ExpressionAtlas" id="Q9LXF2">
    <property type="expression patterns" value="baseline and differential"/>
</dbReference>
<dbReference type="GO" id="GO:0003723">
    <property type="term" value="F:RNA binding"/>
    <property type="evidence" value="ECO:0007669"/>
    <property type="project" value="InterPro"/>
</dbReference>
<dbReference type="GO" id="GO:0009451">
    <property type="term" value="P:RNA modification"/>
    <property type="evidence" value="ECO:0007669"/>
    <property type="project" value="InterPro"/>
</dbReference>
<dbReference type="FunFam" id="1.25.40.10:FF:000941">
    <property type="entry name" value="Pentatricopeptide repeat-containing protein At5g15300"/>
    <property type="match status" value="1"/>
</dbReference>
<dbReference type="FunFam" id="1.25.40.10:FF:002347">
    <property type="entry name" value="Pentatricopeptide repeat-containing protein At5g15300"/>
    <property type="match status" value="1"/>
</dbReference>
<dbReference type="FunFam" id="1.25.40.10:FF:000090">
    <property type="entry name" value="Pentatricopeptide repeat-containing protein, chloroplastic"/>
    <property type="match status" value="1"/>
</dbReference>
<dbReference type="Gene3D" id="1.25.40.10">
    <property type="entry name" value="Tetratricopeptide repeat domain"/>
    <property type="match status" value="4"/>
</dbReference>
<dbReference type="InterPro" id="IPR046848">
    <property type="entry name" value="E_motif"/>
</dbReference>
<dbReference type="InterPro" id="IPR002885">
    <property type="entry name" value="Pentatricopeptide_rpt"/>
</dbReference>
<dbReference type="InterPro" id="IPR046960">
    <property type="entry name" value="PPR_At4g14850-like_plant"/>
</dbReference>
<dbReference type="InterPro" id="IPR011990">
    <property type="entry name" value="TPR-like_helical_dom_sf"/>
</dbReference>
<dbReference type="NCBIfam" id="TIGR00756">
    <property type="entry name" value="PPR"/>
    <property type="match status" value="7"/>
</dbReference>
<dbReference type="PANTHER" id="PTHR47926">
    <property type="entry name" value="PENTATRICOPEPTIDE REPEAT-CONTAINING PROTEIN"/>
    <property type="match status" value="1"/>
</dbReference>
<dbReference type="PANTHER" id="PTHR47926:SF391">
    <property type="entry name" value="TETRATRICOPEPTIDE-LIKE HELICAL DOMAIN SUPERFAMILY"/>
    <property type="match status" value="1"/>
</dbReference>
<dbReference type="Pfam" id="PF20431">
    <property type="entry name" value="E_motif"/>
    <property type="match status" value="1"/>
</dbReference>
<dbReference type="Pfam" id="PF01535">
    <property type="entry name" value="PPR"/>
    <property type="match status" value="4"/>
</dbReference>
<dbReference type="Pfam" id="PF13041">
    <property type="entry name" value="PPR_2"/>
    <property type="match status" value="2"/>
</dbReference>
<dbReference type="SUPFAM" id="SSF48452">
    <property type="entry name" value="TPR-like"/>
    <property type="match status" value="1"/>
</dbReference>
<dbReference type="PROSITE" id="PS51375">
    <property type="entry name" value="PPR"/>
    <property type="match status" value="10"/>
</dbReference>
<name>PP385_ARATH</name>
<sequence length="548" mass="62112">MIRRQTNDRTTNRRRPKLWQNCKNIRTLKQIHASMVVNGLMSNLSVVGELIYSASLSVPGALKYAHKLFDEIPKPDVSICNHVLRGSAQSMKPEKTVSLYTEMEKRGVSPDRYTFTFVLKACSKLEWRSNGFAFHGKVVRHGFVLNEYVKNALILFHANCGDLGIASELFDDSAKAHKVAWSSMTSGYAKRGKIDEAMRLFDEMPYKDQVAWNVMITGCLKCKEMDSARELFDRFTEKDVVTWNAMISGYVNCGYPKEALGIFKEMRDAGEHPDVVTILSLLSACAVLGDLETGKRLHIYILETASVSSSIYVGTPIWNALIDMYAKCGSIDRAIEVFRGVKDRDLSTWNTLIVGLALHHAEGSIEMFEEMQRLKVWPNEVTFIGVILACSHSGRVDEGRKYFSLMRDMYNIEPNIKHYGCMVDMLGRAGQLEEAFMFVESMKIEPNAIVWRTLLGACKIYGNVELGKYANEKLLSMRKDESGDYVLLSNIYASTGQWDGVQKVRKMFDDTRVKKPTGVSLIEEDDDKLMMRYLLSSEPESRSRGRIN</sequence>
<comment type="similarity">
    <text evidence="1">Belongs to the PPR family. PCMP-E subfamily.</text>
</comment>
<comment type="sequence caution" evidence="1">
    <conflict type="miscellaneous discrepancy">
        <sequence resource="EMBL" id="BX832059"/>
    </conflict>
    <text>Sequencing errors.</text>
</comment>
<comment type="sequence caution" evidence="1">
    <conflict type="erroneous initiation">
        <sequence resource="EMBL-CDS" id="CAB89340"/>
    </conflict>
</comment>
<comment type="online information" name="Pentatricopeptide repeat proteins">
    <link uri="https://ppr.plantenergy.uwa.edu.au"/>
</comment>
<evidence type="ECO:0000305" key="1"/>
<gene>
    <name type="primary">PCMP-E40</name>
    <name type="ordered locus">At5g15300</name>
    <name type="ORF">F8M21_190</name>
</gene>
<keyword id="KW-1185">Reference proteome</keyword>
<keyword id="KW-0677">Repeat</keyword>